<feature type="signal peptide" evidence="2">
    <location>
        <begin position="1"/>
        <end position="21"/>
    </location>
</feature>
<feature type="chain" id="PRO_0000282421" description="Coiled-coil domain-containing protein 80">
    <location>
        <begin position="22"/>
        <end position="958"/>
    </location>
</feature>
<feature type="region of interest" description="Disordered" evidence="3">
    <location>
        <begin position="30"/>
        <end position="99"/>
    </location>
</feature>
<feature type="region of interest" description="Disordered" evidence="3">
    <location>
        <begin position="290"/>
        <end position="335"/>
    </location>
</feature>
<feature type="region of interest" description="Disordered" evidence="3">
    <location>
        <begin position="358"/>
        <end position="396"/>
    </location>
</feature>
<feature type="region of interest" description="Disordered" evidence="3">
    <location>
        <begin position="424"/>
        <end position="452"/>
    </location>
</feature>
<feature type="region of interest" description="Disordered" evidence="3">
    <location>
        <begin position="467"/>
        <end position="617"/>
    </location>
</feature>
<feature type="compositionally biased region" description="Low complexity" evidence="3">
    <location>
        <begin position="358"/>
        <end position="389"/>
    </location>
</feature>
<feature type="compositionally biased region" description="Basic and acidic residues" evidence="3">
    <location>
        <begin position="425"/>
        <end position="438"/>
    </location>
</feature>
<feature type="compositionally biased region" description="Basic and acidic residues" evidence="3">
    <location>
        <begin position="471"/>
        <end position="487"/>
    </location>
</feature>
<feature type="compositionally biased region" description="Basic residues" evidence="3">
    <location>
        <begin position="495"/>
        <end position="506"/>
    </location>
</feature>
<feature type="compositionally biased region" description="Basic and acidic residues" evidence="3">
    <location>
        <begin position="547"/>
        <end position="589"/>
    </location>
</feature>
<feature type="compositionally biased region" description="Basic and acidic residues" evidence="3">
    <location>
        <begin position="597"/>
        <end position="606"/>
    </location>
</feature>
<feature type="splice variant" id="VSP_024137" description="In isoform 2." evidence="5">
    <original>LITTPK</original>
    <variation>VSNLFI</variation>
    <location>
        <begin position="635"/>
        <end position="640"/>
    </location>
</feature>
<feature type="splice variant" id="VSP_024138" description="In isoform 2." evidence="5">
    <location>
        <begin position="641"/>
        <end position="958"/>
    </location>
</feature>
<name>CCD80_CHICK</name>
<evidence type="ECO:0000250" key="1"/>
<evidence type="ECO:0000255" key="2"/>
<evidence type="ECO:0000256" key="3">
    <source>
        <dbReference type="SAM" id="MobiDB-lite"/>
    </source>
</evidence>
<evidence type="ECO:0000269" key="4">
    <source>
    </source>
</evidence>
<evidence type="ECO:0000303" key="5">
    <source>
    </source>
</evidence>
<evidence type="ECO:0000305" key="6"/>
<comment type="function">
    <text evidence="1 4">Promotes cell adhesion and matrix assembly (By similarity). May play a role in eye formation.</text>
</comment>
<comment type="subunit">
    <text evidence="1">Binds to various extracellular matrix proteins.</text>
</comment>
<comment type="subcellular location">
    <subcellularLocation>
        <location evidence="1">Secreted</location>
        <location evidence="1">Extracellular space</location>
        <location evidence="1">Extracellular matrix</location>
    </subcellularLocation>
</comment>
<comment type="alternative products">
    <event type="alternative splicing"/>
    <isoform>
        <id>Q8AXP2-1</id>
        <name>1</name>
        <name>Equarin-L</name>
        <sequence type="displayed"/>
    </isoform>
    <isoform>
        <id>Q8AXP2-2</id>
        <name>2</name>
        <name>Equarin-S</name>
        <sequence type="described" ref="VSP_024137 VSP_024138"/>
    </isoform>
</comment>
<comment type="developmental stage">
    <text evidence="4">Isoform 2 is expressed in the lens placode at stage 14. Isoform 1 is expressed in the lens vesicle at stage 17. Isoform 1 and isoform 2 are expressed in the lens, isthmus, cranial neuronal tube, dermatome and vitelin vein at stage 19. Isoform 1 and isoform 2 are expressed in the lens equatorial region during 4.5 dpc to 10 dpc.</text>
</comment>
<comment type="similarity">
    <text evidence="6">Belongs to the CCDC80 family.</text>
</comment>
<comment type="sequence caution" evidence="6">
    <conflict type="frameshift">
        <sequence resource="EMBL-CDS" id="BAC54278"/>
    </conflict>
</comment>
<reference key="1">
    <citation type="journal article" date="2003" name="Mech. Dev.">
        <title>Equarin, a novel soluble molecule expressed with polarity at chick embryonic lens equator, is involved in eye formation.</title>
        <authorList>
            <person name="Mu H."/>
            <person name="Ohta K."/>
            <person name="Kuriyama S."/>
            <person name="Shimada N."/>
            <person name="Tanihara H."/>
            <person name="Yasuda K."/>
            <person name="Tanaka H."/>
        </authorList>
    </citation>
    <scope>NUCLEOTIDE SEQUENCE [MRNA] (ISOFORMS 1 AND 2)</scope>
    <scope>FUNCTION</scope>
    <scope>SUBCELLULAR LOCATION</scope>
    <scope>DEVELOPMENTAL STAGE</scope>
    <source>
        <tissue>Lens</tissue>
    </source>
</reference>
<dbReference type="EMBL" id="AB086823">
    <property type="protein sequence ID" value="BAC54278.1"/>
    <property type="status" value="ALT_FRAME"/>
    <property type="molecule type" value="mRNA"/>
</dbReference>
<dbReference type="EMBL" id="AB086824">
    <property type="protein sequence ID" value="BAC54279.1"/>
    <property type="molecule type" value="mRNA"/>
</dbReference>
<dbReference type="RefSeq" id="NP_989762.1">
    <property type="nucleotide sequence ID" value="NM_204431.1"/>
</dbReference>
<dbReference type="SMR" id="Q8AXP2"/>
<dbReference type="FunCoup" id="Q8AXP2">
    <property type="interactions" value="55"/>
</dbReference>
<dbReference type="STRING" id="9031.ENSGALP00000024466"/>
<dbReference type="PaxDb" id="9031-ENSGALP00000024466"/>
<dbReference type="GeneID" id="395074"/>
<dbReference type="KEGG" id="gga:395074"/>
<dbReference type="CTD" id="151887"/>
<dbReference type="VEuPathDB" id="HostDB:geneid_395074"/>
<dbReference type="eggNOG" id="ENOG502QRG7">
    <property type="taxonomic scope" value="Eukaryota"/>
</dbReference>
<dbReference type="InParanoid" id="Q8AXP2"/>
<dbReference type="OrthoDB" id="9898686at2759"/>
<dbReference type="PhylomeDB" id="Q8AXP2"/>
<dbReference type="PRO" id="PR:Q8AXP2"/>
<dbReference type="Proteomes" id="UP000000539">
    <property type="component" value="Unassembled WGS sequence"/>
</dbReference>
<dbReference type="GO" id="GO:0005604">
    <property type="term" value="C:basement membrane"/>
    <property type="evidence" value="ECO:0000318"/>
    <property type="project" value="GO_Central"/>
</dbReference>
<dbReference type="GO" id="GO:0005576">
    <property type="term" value="C:extracellular region"/>
    <property type="evidence" value="ECO:0007669"/>
    <property type="project" value="UniProtKB-KW"/>
</dbReference>
<dbReference type="GO" id="GO:0030198">
    <property type="term" value="P:extracellular matrix organization"/>
    <property type="evidence" value="ECO:0000318"/>
    <property type="project" value="GO_Central"/>
</dbReference>
<dbReference type="GO" id="GO:0010811">
    <property type="term" value="P:positive regulation of cell-substrate adhesion"/>
    <property type="evidence" value="ECO:0000318"/>
    <property type="project" value="GO_Central"/>
</dbReference>
<dbReference type="InterPro" id="IPR025232">
    <property type="entry name" value="DUF4174"/>
</dbReference>
<dbReference type="PANTHER" id="PTHR46792">
    <property type="entry name" value="COILED-COIL DOMAIN-CONTAINING PROTEIN 80"/>
    <property type="match status" value="1"/>
</dbReference>
<dbReference type="PANTHER" id="PTHR46792:SF2">
    <property type="entry name" value="COILED-COIL DOMAIN-CONTAINING PROTEIN 80"/>
    <property type="match status" value="1"/>
</dbReference>
<dbReference type="Pfam" id="PF13778">
    <property type="entry name" value="DUF4174"/>
    <property type="match status" value="3"/>
</dbReference>
<proteinExistence type="evidence at transcript level"/>
<organism>
    <name type="scientific">Gallus gallus</name>
    <name type="common">Chicken</name>
    <dbReference type="NCBI Taxonomy" id="9031"/>
    <lineage>
        <taxon>Eukaryota</taxon>
        <taxon>Metazoa</taxon>
        <taxon>Chordata</taxon>
        <taxon>Craniata</taxon>
        <taxon>Vertebrata</taxon>
        <taxon>Euteleostomi</taxon>
        <taxon>Archelosauria</taxon>
        <taxon>Archosauria</taxon>
        <taxon>Dinosauria</taxon>
        <taxon>Saurischia</taxon>
        <taxon>Theropoda</taxon>
        <taxon>Coelurosauria</taxon>
        <taxon>Aves</taxon>
        <taxon>Neognathae</taxon>
        <taxon>Galloanserae</taxon>
        <taxon>Galliformes</taxon>
        <taxon>Phasianidae</taxon>
        <taxon>Phasianinae</taxon>
        <taxon>Gallus</taxon>
    </lineage>
</organism>
<gene>
    <name type="primary">CCDC80</name>
</gene>
<protein>
    <recommendedName>
        <fullName>Coiled-coil domain-containing protein 80</fullName>
    </recommendedName>
    <alternativeName>
        <fullName>Equarin</fullName>
    </alternativeName>
</protein>
<sequence length="958" mass="109323">MNWMPALSLALLWTAWLVCGSEKTGRLAERGSHGVRKVPQSHRAPSSLLRRSGASLKNLSPSPQHPVTKRDSSVPPKAPANLLKEESRSQPRSVGTRTRRLQRLTAAAKYSKSEMIKDEGISTASQSRAVRFPSGSSSPNVLASFAGKNRVWVISAPHASEGYYRLMMSLLKNDVYCELAERHIQQIVLFHEEGEEGGKVRRITNEGKILEQPLDPALIPKLMSFLKLEKGKFGMVLLKKTLQVEERYPYPVRLEAMYEVIDQNPIRKIEKMRQKGFIQTCKAAGVEGQVVEDDNNGGSTQSIPGGGHVQVSAGGRKEEPRRSSNQPTRTKTVRKPMTTTVATPLPTVRTTTLPTTTTATRATTRTVTTASRPTTTTTPLPTTQRTWTTKSHTTTEYHRLPASPEVTTPRVMASEDFYSPVWKANRRDRQRGHPEKHLAATRKPSKGGRYESFTEVPTAPSVHYTKASMSRFKDNRTDRKDYNHRDLNVTPGQHKPTKTKPPKKKTQEKILSNEYEDKYDPSKPASPHLEEEIAVGSIPPKKGKESKKHERMDKPEKKKKKDRPDKLHKSEKQSKKDKAEKKSKQDKDRSKKNKKGSRTENEDFPKPNKKPFLQPPRKSVANLLDYFEGKRRLILITTPKADNTMYVQQRDEYLESFCKMATRKISVITIFGTMNNSSMKIDHFQLDNEKPMKVIEDEDLVDQQLISELRKEYGMTYNDFFMVLTDTDMKVKQYYEVPIAMKSVFDLIDTFQSRIKDMERQKKEGIVCKEDKKQSLESFLSRFRWRRRLVVISAPSDEDWAYSQQLAALSGQACNFGLRHITILKLLGVGEDIGGVLELYPINGSATVDREDIPANLVKDIRNYFQISPEYFSMLLVGKDGNVKSWYPSPMWSMAIVYDLIDSMQLRRQEMTIQQSLGMQCPEDEYGGYGYHSYHQGYQEGYQDDYRHHGSYHHGYPY</sequence>
<keyword id="KW-0025">Alternative splicing</keyword>
<keyword id="KW-0272">Extracellular matrix</keyword>
<keyword id="KW-1185">Reference proteome</keyword>
<keyword id="KW-0964">Secreted</keyword>
<keyword id="KW-0732">Signal</keyword>
<accession>Q8AXP2</accession>
<accession>Q8AXP3</accession>